<protein>
    <recommendedName>
        <fullName evidence="1">tRNA-specific 2-thiouridylase MnmA</fullName>
        <ecNumber evidence="1">2.8.1.13</ecNumber>
    </recommendedName>
</protein>
<comment type="function">
    <text evidence="1">Catalyzes the 2-thiolation of uridine at the wobble position (U34) of tRNA, leading to the formation of s(2)U34.</text>
</comment>
<comment type="catalytic activity">
    <reaction evidence="1">
        <text>S-sulfanyl-L-cysteinyl-[protein] + uridine(34) in tRNA + AH2 + ATP = 2-thiouridine(34) in tRNA + L-cysteinyl-[protein] + A + AMP + diphosphate + H(+)</text>
        <dbReference type="Rhea" id="RHEA:47032"/>
        <dbReference type="Rhea" id="RHEA-COMP:10131"/>
        <dbReference type="Rhea" id="RHEA-COMP:11726"/>
        <dbReference type="Rhea" id="RHEA-COMP:11727"/>
        <dbReference type="Rhea" id="RHEA-COMP:11728"/>
        <dbReference type="ChEBI" id="CHEBI:13193"/>
        <dbReference type="ChEBI" id="CHEBI:15378"/>
        <dbReference type="ChEBI" id="CHEBI:17499"/>
        <dbReference type="ChEBI" id="CHEBI:29950"/>
        <dbReference type="ChEBI" id="CHEBI:30616"/>
        <dbReference type="ChEBI" id="CHEBI:33019"/>
        <dbReference type="ChEBI" id="CHEBI:61963"/>
        <dbReference type="ChEBI" id="CHEBI:65315"/>
        <dbReference type="ChEBI" id="CHEBI:87170"/>
        <dbReference type="ChEBI" id="CHEBI:456215"/>
        <dbReference type="EC" id="2.8.1.13"/>
    </reaction>
</comment>
<comment type="subcellular location">
    <subcellularLocation>
        <location evidence="1">Cytoplasm</location>
    </subcellularLocation>
</comment>
<comment type="similarity">
    <text evidence="1">Belongs to the MnmA/TRMU family.</text>
</comment>
<dbReference type="EC" id="2.8.1.13" evidence="1"/>
<dbReference type="EMBL" id="AE008923">
    <property type="protein sequence ID" value="AAM36860.1"/>
    <property type="molecule type" value="Genomic_DNA"/>
</dbReference>
<dbReference type="RefSeq" id="WP_011051272.1">
    <property type="nucleotide sequence ID" value="NC_003919.1"/>
</dbReference>
<dbReference type="SMR" id="Q8PL08"/>
<dbReference type="GeneID" id="66911134"/>
<dbReference type="KEGG" id="xac:XAC1998"/>
<dbReference type="eggNOG" id="COG0482">
    <property type="taxonomic scope" value="Bacteria"/>
</dbReference>
<dbReference type="HOGENOM" id="CLU_035188_1_0_6"/>
<dbReference type="Proteomes" id="UP000000576">
    <property type="component" value="Chromosome"/>
</dbReference>
<dbReference type="GO" id="GO:0005737">
    <property type="term" value="C:cytoplasm"/>
    <property type="evidence" value="ECO:0007669"/>
    <property type="project" value="UniProtKB-SubCell"/>
</dbReference>
<dbReference type="GO" id="GO:0005524">
    <property type="term" value="F:ATP binding"/>
    <property type="evidence" value="ECO:0007669"/>
    <property type="project" value="UniProtKB-KW"/>
</dbReference>
<dbReference type="GO" id="GO:0000049">
    <property type="term" value="F:tRNA binding"/>
    <property type="evidence" value="ECO:0007669"/>
    <property type="project" value="UniProtKB-KW"/>
</dbReference>
<dbReference type="GO" id="GO:0103016">
    <property type="term" value="F:tRNA-uridine 2-sulfurtransferase activity"/>
    <property type="evidence" value="ECO:0007669"/>
    <property type="project" value="UniProtKB-EC"/>
</dbReference>
<dbReference type="GO" id="GO:0002143">
    <property type="term" value="P:tRNA wobble position uridine thiolation"/>
    <property type="evidence" value="ECO:0007669"/>
    <property type="project" value="TreeGrafter"/>
</dbReference>
<dbReference type="CDD" id="cd01998">
    <property type="entry name" value="MnmA_TRMU-like"/>
    <property type="match status" value="1"/>
</dbReference>
<dbReference type="FunFam" id="2.30.30.280:FF:000001">
    <property type="entry name" value="tRNA-specific 2-thiouridylase MnmA"/>
    <property type="match status" value="1"/>
</dbReference>
<dbReference type="FunFam" id="2.40.30.10:FF:000023">
    <property type="entry name" value="tRNA-specific 2-thiouridylase MnmA"/>
    <property type="match status" value="1"/>
</dbReference>
<dbReference type="FunFam" id="3.40.50.620:FF:000004">
    <property type="entry name" value="tRNA-specific 2-thiouridylase MnmA"/>
    <property type="match status" value="1"/>
</dbReference>
<dbReference type="Gene3D" id="2.30.30.280">
    <property type="entry name" value="Adenine nucleotide alpha hydrolases-like domains"/>
    <property type="match status" value="1"/>
</dbReference>
<dbReference type="Gene3D" id="3.40.50.620">
    <property type="entry name" value="HUPs"/>
    <property type="match status" value="1"/>
</dbReference>
<dbReference type="Gene3D" id="2.40.30.10">
    <property type="entry name" value="Translation factors"/>
    <property type="match status" value="1"/>
</dbReference>
<dbReference type="HAMAP" id="MF_00144">
    <property type="entry name" value="tRNA_thiouridyl_MnmA"/>
    <property type="match status" value="1"/>
</dbReference>
<dbReference type="InterPro" id="IPR004506">
    <property type="entry name" value="MnmA-like"/>
</dbReference>
<dbReference type="InterPro" id="IPR046885">
    <property type="entry name" value="MnmA-like_C"/>
</dbReference>
<dbReference type="InterPro" id="IPR046884">
    <property type="entry name" value="MnmA-like_central"/>
</dbReference>
<dbReference type="InterPro" id="IPR023382">
    <property type="entry name" value="MnmA-like_central_sf"/>
</dbReference>
<dbReference type="InterPro" id="IPR014729">
    <property type="entry name" value="Rossmann-like_a/b/a_fold"/>
</dbReference>
<dbReference type="NCBIfam" id="NF001138">
    <property type="entry name" value="PRK00143.1"/>
    <property type="match status" value="1"/>
</dbReference>
<dbReference type="NCBIfam" id="TIGR00420">
    <property type="entry name" value="trmU"/>
    <property type="match status" value="1"/>
</dbReference>
<dbReference type="PANTHER" id="PTHR11933:SF5">
    <property type="entry name" value="MITOCHONDRIAL TRNA-SPECIFIC 2-THIOURIDYLASE 1"/>
    <property type="match status" value="1"/>
</dbReference>
<dbReference type="PANTHER" id="PTHR11933">
    <property type="entry name" value="TRNA 5-METHYLAMINOMETHYL-2-THIOURIDYLATE -METHYLTRANSFERASE"/>
    <property type="match status" value="1"/>
</dbReference>
<dbReference type="Pfam" id="PF03054">
    <property type="entry name" value="tRNA_Me_trans"/>
    <property type="match status" value="1"/>
</dbReference>
<dbReference type="Pfam" id="PF20258">
    <property type="entry name" value="tRNA_Me_trans_C"/>
    <property type="match status" value="1"/>
</dbReference>
<dbReference type="Pfam" id="PF20259">
    <property type="entry name" value="tRNA_Me_trans_M"/>
    <property type="match status" value="1"/>
</dbReference>
<dbReference type="SUPFAM" id="SSF52402">
    <property type="entry name" value="Adenine nucleotide alpha hydrolases-like"/>
    <property type="match status" value="1"/>
</dbReference>
<sequence>MSTPRIVVGVSGGVDSSVAAWKLAQQGEPIAGLFMQNWADDGSGDCRAEDDRRDAVAVCGVLGIPFHFRDFSGEYWSDVFEHFLAEYAAGRTPNPDVLCNREVKFKHFLDAAQALGAERIATGHYAQVAHRGGRWRLLRGADRGKDQSYFLHQLGQTQLAATLFPIGDLEKSTLRRIAQDAGLPTHAKKDSTGICFIGERDFREFLGRYLPARTGEIRDPQGQRIAEHPGVFYFTLGQREGLNIGGVRGRAAAPWYVVGKDVANNVLYVDQDRDSPLLQSRWLQSEQAHWVTGAPPARRFSCTAQTRYRQPDESCTVDVQDDGSVQVRFERPQRAVTPGQSLVLYDGEECLGGAVIAATDAPLERQLAGSSFSSEVVA</sequence>
<feature type="chain" id="PRO_0000121703" description="tRNA-specific 2-thiouridylase MnmA">
    <location>
        <begin position="1"/>
        <end position="378"/>
    </location>
</feature>
<feature type="region of interest" description="Interaction with target base in tRNA" evidence="1">
    <location>
        <begin position="94"/>
        <end position="96"/>
    </location>
</feature>
<feature type="region of interest" description="Interaction with tRNA" evidence="1">
    <location>
        <begin position="145"/>
        <end position="147"/>
    </location>
</feature>
<feature type="region of interest" description="Interaction with tRNA" evidence="1">
    <location>
        <begin position="307"/>
        <end position="308"/>
    </location>
</feature>
<feature type="active site" description="Nucleophile" evidence="1">
    <location>
        <position position="99"/>
    </location>
</feature>
<feature type="active site" description="Cysteine persulfide intermediate" evidence="1">
    <location>
        <position position="195"/>
    </location>
</feature>
<feature type="binding site" evidence="1">
    <location>
        <begin position="9"/>
        <end position="16"/>
    </location>
    <ligand>
        <name>ATP</name>
        <dbReference type="ChEBI" id="CHEBI:30616"/>
    </ligand>
</feature>
<feature type="binding site" evidence="1">
    <location>
        <position position="35"/>
    </location>
    <ligand>
        <name>ATP</name>
        <dbReference type="ChEBI" id="CHEBI:30616"/>
    </ligand>
</feature>
<feature type="binding site" evidence="1">
    <location>
        <position position="123"/>
    </location>
    <ligand>
        <name>ATP</name>
        <dbReference type="ChEBI" id="CHEBI:30616"/>
    </ligand>
</feature>
<feature type="site" description="Interaction with tRNA" evidence="1">
    <location>
        <position position="124"/>
    </location>
</feature>
<feature type="site" description="Interaction with tRNA" evidence="1">
    <location>
        <position position="340"/>
    </location>
</feature>
<feature type="disulfide bond" description="Alternate" evidence="1">
    <location>
        <begin position="99"/>
        <end position="195"/>
    </location>
</feature>
<evidence type="ECO:0000255" key="1">
    <source>
        <dbReference type="HAMAP-Rule" id="MF_00144"/>
    </source>
</evidence>
<reference key="1">
    <citation type="journal article" date="2002" name="Nature">
        <title>Comparison of the genomes of two Xanthomonas pathogens with differing host specificities.</title>
        <authorList>
            <person name="da Silva A.C.R."/>
            <person name="Ferro J.A."/>
            <person name="Reinach F.C."/>
            <person name="Farah C.S."/>
            <person name="Furlan L.R."/>
            <person name="Quaggio R.B."/>
            <person name="Monteiro-Vitorello C.B."/>
            <person name="Van Sluys M.A."/>
            <person name="Almeida N.F. Jr."/>
            <person name="Alves L.M.C."/>
            <person name="do Amaral A.M."/>
            <person name="Bertolini M.C."/>
            <person name="Camargo L.E.A."/>
            <person name="Camarotte G."/>
            <person name="Cannavan F."/>
            <person name="Cardozo J."/>
            <person name="Chambergo F."/>
            <person name="Ciapina L.P."/>
            <person name="Cicarelli R.M.B."/>
            <person name="Coutinho L.L."/>
            <person name="Cursino-Santos J.R."/>
            <person name="El-Dorry H."/>
            <person name="Faria J.B."/>
            <person name="Ferreira A.J.S."/>
            <person name="Ferreira R.C.C."/>
            <person name="Ferro M.I.T."/>
            <person name="Formighieri E.F."/>
            <person name="Franco M.C."/>
            <person name="Greggio C.C."/>
            <person name="Gruber A."/>
            <person name="Katsuyama A.M."/>
            <person name="Kishi L.T."/>
            <person name="Leite R.P."/>
            <person name="Lemos E.G.M."/>
            <person name="Lemos M.V.F."/>
            <person name="Locali E.C."/>
            <person name="Machado M.A."/>
            <person name="Madeira A.M.B.N."/>
            <person name="Martinez-Rossi N.M."/>
            <person name="Martins E.C."/>
            <person name="Meidanis J."/>
            <person name="Menck C.F.M."/>
            <person name="Miyaki C.Y."/>
            <person name="Moon D.H."/>
            <person name="Moreira L.M."/>
            <person name="Novo M.T.M."/>
            <person name="Okura V.K."/>
            <person name="Oliveira M.C."/>
            <person name="Oliveira V.R."/>
            <person name="Pereira H.A."/>
            <person name="Rossi A."/>
            <person name="Sena J.A.D."/>
            <person name="Silva C."/>
            <person name="de Souza R.F."/>
            <person name="Spinola L.A.F."/>
            <person name="Takita M.A."/>
            <person name="Tamura R.E."/>
            <person name="Teixeira E.C."/>
            <person name="Tezza R.I.D."/>
            <person name="Trindade dos Santos M."/>
            <person name="Truffi D."/>
            <person name="Tsai S.M."/>
            <person name="White F.F."/>
            <person name="Setubal J.C."/>
            <person name="Kitajima J.P."/>
        </authorList>
    </citation>
    <scope>NUCLEOTIDE SEQUENCE [LARGE SCALE GENOMIC DNA]</scope>
    <source>
        <strain>306</strain>
    </source>
</reference>
<gene>
    <name evidence="1" type="primary">mnmA</name>
    <name type="synonym">trmU</name>
    <name type="ordered locus">XAC1998</name>
</gene>
<proteinExistence type="inferred from homology"/>
<keyword id="KW-0067">ATP-binding</keyword>
<keyword id="KW-0963">Cytoplasm</keyword>
<keyword id="KW-1015">Disulfide bond</keyword>
<keyword id="KW-0547">Nucleotide-binding</keyword>
<keyword id="KW-0694">RNA-binding</keyword>
<keyword id="KW-0808">Transferase</keyword>
<keyword id="KW-0819">tRNA processing</keyword>
<keyword id="KW-0820">tRNA-binding</keyword>
<accession>Q8PL08</accession>
<name>MNMA_XANAC</name>
<organism>
    <name type="scientific">Xanthomonas axonopodis pv. citri (strain 306)</name>
    <dbReference type="NCBI Taxonomy" id="190486"/>
    <lineage>
        <taxon>Bacteria</taxon>
        <taxon>Pseudomonadati</taxon>
        <taxon>Pseudomonadota</taxon>
        <taxon>Gammaproteobacteria</taxon>
        <taxon>Lysobacterales</taxon>
        <taxon>Lysobacteraceae</taxon>
        <taxon>Xanthomonas</taxon>
    </lineage>
</organism>